<comment type="function">
    <text evidence="1">Endonuclease that resolves Holliday junction intermediates in genetic recombination. Cleaves mobile four-strand junctions by introducing symmetrical nicks in paired strands. Promotes annealing of linear ssDNA with homologous dsDNA. Required for DNA repair, homologous recombination and chromosome segregation.</text>
</comment>
<comment type="catalytic activity">
    <reaction evidence="1">
        <text>Endonucleolytic cleavage at a junction such as a reciprocal single-stranded crossover between two homologous DNA duplexes (Holliday junction).</text>
        <dbReference type="EC" id="3.1.21.10"/>
    </reaction>
</comment>
<comment type="cofactor">
    <cofactor evidence="1">
        <name>Mg(2+)</name>
        <dbReference type="ChEBI" id="CHEBI:18420"/>
    </cofactor>
    <text evidence="1">Binds 1 Mg(2+) ion per subunit.</text>
</comment>
<comment type="subcellular location">
    <subcellularLocation>
        <location evidence="1">Cytoplasm</location>
    </subcellularLocation>
</comment>
<comment type="similarity">
    <text evidence="1">Belongs to the RecU family.</text>
</comment>
<dbReference type="EC" id="3.1.21.10" evidence="1"/>
<dbReference type="EMBL" id="CP000423">
    <property type="protein sequence ID" value="ABJ70257.1"/>
    <property type="molecule type" value="Genomic_DNA"/>
</dbReference>
<dbReference type="RefSeq" id="WP_003565605.1">
    <property type="nucleotide sequence ID" value="NC_008526.1"/>
</dbReference>
<dbReference type="RefSeq" id="YP_806699.1">
    <property type="nucleotide sequence ID" value="NC_008526.1"/>
</dbReference>
<dbReference type="SMR" id="Q038W5"/>
<dbReference type="STRING" id="321967.LSEI_1480"/>
<dbReference type="PaxDb" id="321967-LSEI_1480"/>
<dbReference type="GeneID" id="57090144"/>
<dbReference type="KEGG" id="lca:LSEI_1480"/>
<dbReference type="PATRIC" id="fig|321967.11.peg.1460"/>
<dbReference type="HOGENOM" id="CLU_096340_0_0_9"/>
<dbReference type="Proteomes" id="UP000001651">
    <property type="component" value="Chromosome"/>
</dbReference>
<dbReference type="GO" id="GO:0005737">
    <property type="term" value="C:cytoplasm"/>
    <property type="evidence" value="ECO:0007669"/>
    <property type="project" value="UniProtKB-SubCell"/>
</dbReference>
<dbReference type="GO" id="GO:0004519">
    <property type="term" value="F:endonuclease activity"/>
    <property type="evidence" value="ECO:0007669"/>
    <property type="project" value="UniProtKB-UniRule"/>
</dbReference>
<dbReference type="GO" id="GO:0000287">
    <property type="term" value="F:magnesium ion binding"/>
    <property type="evidence" value="ECO:0007669"/>
    <property type="project" value="UniProtKB-UniRule"/>
</dbReference>
<dbReference type="GO" id="GO:0003676">
    <property type="term" value="F:nucleic acid binding"/>
    <property type="evidence" value="ECO:0007669"/>
    <property type="project" value="InterPro"/>
</dbReference>
<dbReference type="GO" id="GO:0007059">
    <property type="term" value="P:chromosome segregation"/>
    <property type="evidence" value="ECO:0007669"/>
    <property type="project" value="UniProtKB-UniRule"/>
</dbReference>
<dbReference type="GO" id="GO:0006310">
    <property type="term" value="P:DNA recombination"/>
    <property type="evidence" value="ECO:0007669"/>
    <property type="project" value="UniProtKB-UniRule"/>
</dbReference>
<dbReference type="GO" id="GO:0006281">
    <property type="term" value="P:DNA repair"/>
    <property type="evidence" value="ECO:0007669"/>
    <property type="project" value="UniProtKB-UniRule"/>
</dbReference>
<dbReference type="CDD" id="cd22354">
    <property type="entry name" value="RecU-like"/>
    <property type="match status" value="1"/>
</dbReference>
<dbReference type="Gene3D" id="3.40.1350.10">
    <property type="match status" value="1"/>
</dbReference>
<dbReference type="HAMAP" id="MF_00130">
    <property type="entry name" value="RecU"/>
    <property type="match status" value="1"/>
</dbReference>
<dbReference type="InterPro" id="IPR004612">
    <property type="entry name" value="Resolv_RecU"/>
</dbReference>
<dbReference type="InterPro" id="IPR011335">
    <property type="entry name" value="Restrct_endonuc-II-like"/>
</dbReference>
<dbReference type="InterPro" id="IPR011856">
    <property type="entry name" value="tRNA_endonuc-like_dom_sf"/>
</dbReference>
<dbReference type="NCBIfam" id="NF002584">
    <property type="entry name" value="PRK02234.1-5"/>
    <property type="match status" value="1"/>
</dbReference>
<dbReference type="NCBIfam" id="TIGR00648">
    <property type="entry name" value="recU"/>
    <property type="match status" value="1"/>
</dbReference>
<dbReference type="Pfam" id="PF03838">
    <property type="entry name" value="RecU"/>
    <property type="match status" value="1"/>
</dbReference>
<dbReference type="PIRSF" id="PIRSF037785">
    <property type="entry name" value="RecU"/>
    <property type="match status" value="1"/>
</dbReference>
<dbReference type="SUPFAM" id="SSF52980">
    <property type="entry name" value="Restriction endonuclease-like"/>
    <property type="match status" value="1"/>
</dbReference>
<feature type="chain" id="PRO_1000016727" description="Holliday junction resolvase RecU">
    <location>
        <begin position="1"/>
        <end position="208"/>
    </location>
</feature>
<feature type="binding site" evidence="1">
    <location>
        <position position="86"/>
    </location>
    <ligand>
        <name>Mg(2+)</name>
        <dbReference type="ChEBI" id="CHEBI:18420"/>
    </ligand>
</feature>
<feature type="binding site" evidence="1">
    <location>
        <position position="88"/>
    </location>
    <ligand>
        <name>Mg(2+)</name>
        <dbReference type="ChEBI" id="CHEBI:18420"/>
    </ligand>
</feature>
<feature type="binding site" evidence="1">
    <location>
        <position position="101"/>
    </location>
    <ligand>
        <name>Mg(2+)</name>
        <dbReference type="ChEBI" id="CHEBI:18420"/>
    </ligand>
</feature>
<feature type="binding site" evidence="1">
    <location>
        <position position="120"/>
    </location>
    <ligand>
        <name>Mg(2+)</name>
        <dbReference type="ChEBI" id="CHEBI:18420"/>
    </ligand>
</feature>
<feature type="site" description="Transition state stabilizer" evidence="1">
    <location>
        <position position="103"/>
    </location>
</feature>
<name>RECU_LACP3</name>
<gene>
    <name evidence="1" type="primary">recU</name>
    <name type="ordered locus">LSEI_1480</name>
</gene>
<accession>Q038W5</accession>
<sequence>MTIHYPNGNPYKDGTQFSSQAISRPTIYGGRGMTLEEELNISNQYYRSIDKAVVYKKPTPVQIVKVDYPKRSQAVIREAYFKTPSTTDYNGVYRGFYLDFEAKETKNKASFPLKNFHQHQIEHFRRCLKQSGICFVVIRFATLKRLFVFPAGRLIDCWDRQPDGGRKSIPLKDIVTNGFELHPQLQPVIPFLDGVDWLIETKVGNVRG</sequence>
<reference key="1">
    <citation type="journal article" date="2006" name="Proc. Natl. Acad. Sci. U.S.A.">
        <title>Comparative genomics of the lactic acid bacteria.</title>
        <authorList>
            <person name="Makarova K.S."/>
            <person name="Slesarev A."/>
            <person name="Wolf Y.I."/>
            <person name="Sorokin A."/>
            <person name="Mirkin B."/>
            <person name="Koonin E.V."/>
            <person name="Pavlov A."/>
            <person name="Pavlova N."/>
            <person name="Karamychev V."/>
            <person name="Polouchine N."/>
            <person name="Shakhova V."/>
            <person name="Grigoriev I."/>
            <person name="Lou Y."/>
            <person name="Rohksar D."/>
            <person name="Lucas S."/>
            <person name="Huang K."/>
            <person name="Goodstein D.M."/>
            <person name="Hawkins T."/>
            <person name="Plengvidhya V."/>
            <person name="Welker D."/>
            <person name="Hughes J."/>
            <person name="Goh Y."/>
            <person name="Benson A."/>
            <person name="Baldwin K."/>
            <person name="Lee J.-H."/>
            <person name="Diaz-Muniz I."/>
            <person name="Dosti B."/>
            <person name="Smeianov V."/>
            <person name="Wechter W."/>
            <person name="Barabote R."/>
            <person name="Lorca G."/>
            <person name="Altermann E."/>
            <person name="Barrangou R."/>
            <person name="Ganesan B."/>
            <person name="Xie Y."/>
            <person name="Rawsthorne H."/>
            <person name="Tamir D."/>
            <person name="Parker C."/>
            <person name="Breidt F."/>
            <person name="Broadbent J.R."/>
            <person name="Hutkins R."/>
            <person name="O'Sullivan D."/>
            <person name="Steele J."/>
            <person name="Unlu G."/>
            <person name="Saier M.H. Jr."/>
            <person name="Klaenhammer T."/>
            <person name="Richardson P."/>
            <person name="Kozyavkin S."/>
            <person name="Weimer B.C."/>
            <person name="Mills D.A."/>
        </authorList>
    </citation>
    <scope>NUCLEOTIDE SEQUENCE [LARGE SCALE GENOMIC DNA]</scope>
    <source>
        <strain>ATCC 334 / BCRC 17002 / CCUG 31169 / CIP 107868 / KCTC 3260 / NRRL B-441</strain>
    </source>
</reference>
<organism>
    <name type="scientific">Lacticaseibacillus paracasei (strain ATCC 334 / BCRC 17002 / CCUG 31169 / CIP 107868 / KCTC 3260 / NRRL B-441)</name>
    <name type="common">Lactobacillus paracasei</name>
    <dbReference type="NCBI Taxonomy" id="321967"/>
    <lineage>
        <taxon>Bacteria</taxon>
        <taxon>Bacillati</taxon>
        <taxon>Bacillota</taxon>
        <taxon>Bacilli</taxon>
        <taxon>Lactobacillales</taxon>
        <taxon>Lactobacillaceae</taxon>
        <taxon>Lacticaseibacillus</taxon>
    </lineage>
</organism>
<proteinExistence type="inferred from homology"/>
<evidence type="ECO:0000255" key="1">
    <source>
        <dbReference type="HAMAP-Rule" id="MF_00130"/>
    </source>
</evidence>
<protein>
    <recommendedName>
        <fullName evidence="1">Holliday junction resolvase RecU</fullName>
        <ecNumber evidence="1">3.1.21.10</ecNumber>
    </recommendedName>
    <alternativeName>
        <fullName evidence="1">Recombination protein U homolog</fullName>
    </alternativeName>
</protein>
<keyword id="KW-0963">Cytoplasm</keyword>
<keyword id="KW-0227">DNA damage</keyword>
<keyword id="KW-0233">DNA recombination</keyword>
<keyword id="KW-0234">DNA repair</keyword>
<keyword id="KW-0255">Endonuclease</keyword>
<keyword id="KW-0378">Hydrolase</keyword>
<keyword id="KW-0460">Magnesium</keyword>
<keyword id="KW-0479">Metal-binding</keyword>
<keyword id="KW-0540">Nuclease</keyword>
<keyword id="KW-1185">Reference proteome</keyword>